<comment type="function">
    <text evidence="1">Essential component of the Rcs signaling system, which controls transcription of numerous genes. Plays a role in signal transduction from the cell surface to the histidine kinase RcsC. May detect outer membrane defects.</text>
</comment>
<comment type="subcellular location">
    <subcellularLocation>
        <location evidence="1">Cell outer membrane</location>
        <topology evidence="1">Lipid-anchor</topology>
        <orientation evidence="1">Periplasmic side</orientation>
    </subcellularLocation>
</comment>
<comment type="similarity">
    <text evidence="1">Belongs to the RcsF family.</text>
</comment>
<accession>P69412</accession>
<accession>P28633</accession>
<dbReference type="EMBL" id="AE014075">
    <property type="protein sequence ID" value="AAN78729.1"/>
    <property type="molecule type" value="Genomic_DNA"/>
</dbReference>
<dbReference type="RefSeq" id="WP_001202329.1">
    <property type="nucleotide sequence ID" value="NZ_CP051263.1"/>
</dbReference>
<dbReference type="BMRB" id="P69412"/>
<dbReference type="SMR" id="P69412"/>
<dbReference type="STRING" id="199310.c0237"/>
<dbReference type="GeneID" id="86862707"/>
<dbReference type="KEGG" id="ecc:c0237"/>
<dbReference type="eggNOG" id="ENOG5031XBN">
    <property type="taxonomic scope" value="Bacteria"/>
</dbReference>
<dbReference type="HOGENOM" id="CLU_142248_1_0_6"/>
<dbReference type="BioCyc" id="ECOL199310:C0237-MONOMER"/>
<dbReference type="Proteomes" id="UP000001410">
    <property type="component" value="Chromosome"/>
</dbReference>
<dbReference type="GO" id="GO:0031241">
    <property type="term" value="C:periplasmic side of cell outer membrane"/>
    <property type="evidence" value="ECO:0007669"/>
    <property type="project" value="UniProtKB-UniRule"/>
</dbReference>
<dbReference type="GO" id="GO:0035556">
    <property type="term" value="P:intracellular signal transduction"/>
    <property type="evidence" value="ECO:0007669"/>
    <property type="project" value="InterPro"/>
</dbReference>
<dbReference type="FunFam" id="3.30.110.70:FF:000001">
    <property type="entry name" value="Outer membrane lipoprotein RcsF"/>
    <property type="match status" value="1"/>
</dbReference>
<dbReference type="Gene3D" id="3.30.110.70">
    <property type="entry name" value="Hypothetical protein apc22750. Chain B"/>
    <property type="match status" value="1"/>
</dbReference>
<dbReference type="HAMAP" id="MF_00976">
    <property type="entry name" value="RcsF"/>
    <property type="match status" value="1"/>
</dbReference>
<dbReference type="InterPro" id="IPR030852">
    <property type="entry name" value="RcsF"/>
</dbReference>
<dbReference type="NCBIfam" id="NF008048">
    <property type="entry name" value="PRK10781.1"/>
    <property type="match status" value="1"/>
</dbReference>
<dbReference type="Pfam" id="PF16358">
    <property type="entry name" value="RcsF"/>
    <property type="match status" value="1"/>
</dbReference>
<dbReference type="PROSITE" id="PS51257">
    <property type="entry name" value="PROKAR_LIPOPROTEIN"/>
    <property type="match status" value="1"/>
</dbReference>
<name>RCSF_ECOL6</name>
<organism>
    <name type="scientific">Escherichia coli O6:H1 (strain CFT073 / ATCC 700928 / UPEC)</name>
    <dbReference type="NCBI Taxonomy" id="199310"/>
    <lineage>
        <taxon>Bacteria</taxon>
        <taxon>Pseudomonadati</taxon>
        <taxon>Pseudomonadota</taxon>
        <taxon>Gammaproteobacteria</taxon>
        <taxon>Enterobacterales</taxon>
        <taxon>Enterobacteriaceae</taxon>
        <taxon>Escherichia</taxon>
    </lineage>
</organism>
<evidence type="ECO:0000255" key="1">
    <source>
        <dbReference type="HAMAP-Rule" id="MF_00976"/>
    </source>
</evidence>
<evidence type="ECO:0000256" key="2">
    <source>
        <dbReference type="SAM" id="MobiDB-lite"/>
    </source>
</evidence>
<reference key="1">
    <citation type="journal article" date="2002" name="Proc. Natl. Acad. Sci. U.S.A.">
        <title>Extensive mosaic structure revealed by the complete genome sequence of uropathogenic Escherichia coli.</title>
        <authorList>
            <person name="Welch R.A."/>
            <person name="Burland V."/>
            <person name="Plunkett G. III"/>
            <person name="Redford P."/>
            <person name="Roesch P."/>
            <person name="Rasko D."/>
            <person name="Buckles E.L."/>
            <person name="Liou S.-R."/>
            <person name="Boutin A."/>
            <person name="Hackett J."/>
            <person name="Stroud D."/>
            <person name="Mayhew G.F."/>
            <person name="Rose D.J."/>
            <person name="Zhou S."/>
            <person name="Schwartz D.C."/>
            <person name="Perna N.T."/>
            <person name="Mobley H.L.T."/>
            <person name="Donnenberg M.S."/>
            <person name="Blattner F.R."/>
        </authorList>
    </citation>
    <scope>NUCLEOTIDE SEQUENCE [LARGE SCALE GENOMIC DNA]</scope>
    <source>
        <strain>CFT073 / ATCC 700928 / UPEC</strain>
    </source>
</reference>
<proteinExistence type="inferred from homology"/>
<keyword id="KW-0998">Cell outer membrane</keyword>
<keyword id="KW-1015">Disulfide bond</keyword>
<keyword id="KW-0449">Lipoprotein</keyword>
<keyword id="KW-0472">Membrane</keyword>
<keyword id="KW-0564">Palmitate</keyword>
<keyword id="KW-1185">Reference proteome</keyword>
<keyword id="KW-0732">Signal</keyword>
<protein>
    <recommendedName>
        <fullName evidence="1">Outer membrane lipoprotein RcsF</fullName>
    </recommendedName>
</protein>
<sequence length="134" mass="14163">MRALPICLVALMLSGCSMLSRSPVEPVQSTAPQPKAEPAKPKAPRATPVRIYTNAEELVGKPFRDLGEVSGDSCQASNQDSPPSIPTARKRMQINASKMKANAVLLHSCEVTSGTPGCYRQAVCIGSALNITAK</sequence>
<gene>
    <name evidence="1" type="primary">rcsF</name>
    <name type="ordered locus">c0237</name>
</gene>
<feature type="signal peptide" evidence="1">
    <location>
        <begin position="1"/>
        <end position="15"/>
    </location>
</feature>
<feature type="chain" id="PRO_0000097207" description="Outer membrane lipoprotein RcsF">
    <location>
        <begin position="16"/>
        <end position="134"/>
    </location>
</feature>
<feature type="region of interest" description="Disordered" evidence="2">
    <location>
        <begin position="22"/>
        <end position="48"/>
    </location>
</feature>
<feature type="region of interest" description="Disordered" evidence="2">
    <location>
        <begin position="67"/>
        <end position="88"/>
    </location>
</feature>
<feature type="compositionally biased region" description="Polar residues" evidence="2">
    <location>
        <begin position="72"/>
        <end position="82"/>
    </location>
</feature>
<feature type="lipid moiety-binding region" description="N-palmitoyl cysteine" evidence="1">
    <location>
        <position position="16"/>
    </location>
</feature>
<feature type="lipid moiety-binding region" description="S-diacylglycerol cysteine" evidence="1">
    <location>
        <position position="16"/>
    </location>
</feature>
<feature type="disulfide bond" evidence="1">
    <location>
        <begin position="74"/>
        <end position="118"/>
    </location>
</feature>
<feature type="disulfide bond" evidence="1">
    <location>
        <begin position="109"/>
        <end position="124"/>
    </location>
</feature>